<gene>
    <name type="primary">Mrpl9</name>
</gene>
<sequence>MAASVAPGVRTLWWAGAAWLRQGGIRELFRPRIEGSTPGRDFSLSHYQSTVIVERWWKVPLAGEGRKPHLHRRHRVYKLVEDTKHRPKDNLELILTQSVDEIGVRGDLVSVKKSVGRNKLLSQGLAVYASPENRKLFEEEKSLRREGKLEKIQTKAGEATVKFLRSCHLEVGMKNNVKWELNPEIVARHFFKNLGVVVAPHALRLPEEPITRWGEYWCDVTVNGLDTVRVPMSVVLFQKPKTKRYKHWLAQQAAKSVAPTNPQAV</sequence>
<name>RM09_MOUSE</name>
<feature type="transit peptide" description="Mitochondrion" evidence="1">
    <location>
        <begin position="1"/>
        <end position="49"/>
    </location>
</feature>
<feature type="chain" id="PRO_0000030551" description="Large ribosomal subunit protein bL9m">
    <location>
        <begin position="50"/>
        <end position="265"/>
    </location>
</feature>
<evidence type="ECO:0000250" key="1">
    <source>
        <dbReference type="UniProtKB" id="Q2TBK2"/>
    </source>
</evidence>
<evidence type="ECO:0000250" key="2">
    <source>
        <dbReference type="UniProtKB" id="Q9BYD2"/>
    </source>
</evidence>
<evidence type="ECO:0000305" key="3"/>
<dbReference type="EMBL" id="AK046099">
    <property type="protein sequence ID" value="BAC32604.1"/>
    <property type="molecule type" value="mRNA"/>
</dbReference>
<dbReference type="EMBL" id="AK162023">
    <property type="protein sequence ID" value="BAE36685.1"/>
    <property type="molecule type" value="mRNA"/>
</dbReference>
<dbReference type="EMBL" id="AB049637">
    <property type="protein sequence ID" value="BAB40842.1"/>
    <property type="molecule type" value="mRNA"/>
</dbReference>
<dbReference type="CCDS" id="CCDS17593.1"/>
<dbReference type="RefSeq" id="NP_084392.1">
    <property type="nucleotide sequence ID" value="NM_030116.3"/>
</dbReference>
<dbReference type="SMR" id="Q99N94"/>
<dbReference type="BioGRID" id="219457">
    <property type="interactions" value="22"/>
</dbReference>
<dbReference type="ComplexPortal" id="CPX-5302">
    <property type="entry name" value="39S mitochondrial large ribosomal subunit"/>
</dbReference>
<dbReference type="FunCoup" id="Q99N94">
    <property type="interactions" value="2954"/>
</dbReference>
<dbReference type="STRING" id="10090.ENSMUSP00000029786"/>
<dbReference type="GlyGen" id="Q99N94">
    <property type="glycosylation" value="1 site, 1 O-linked glycan (1 site)"/>
</dbReference>
<dbReference type="iPTMnet" id="Q99N94"/>
<dbReference type="PhosphoSitePlus" id="Q99N94"/>
<dbReference type="jPOST" id="Q99N94"/>
<dbReference type="PaxDb" id="10090-ENSMUSP00000029786"/>
<dbReference type="ProteomicsDB" id="301600"/>
<dbReference type="Pumba" id="Q99N94"/>
<dbReference type="Antibodypedia" id="1667">
    <property type="antibodies" value="186 antibodies from 26 providers"/>
</dbReference>
<dbReference type="DNASU" id="78523"/>
<dbReference type="Ensembl" id="ENSMUST00000029786.14">
    <property type="protein sequence ID" value="ENSMUSP00000029786.8"/>
    <property type="gene ID" value="ENSMUSG00000028140.14"/>
</dbReference>
<dbReference type="GeneID" id="78523"/>
<dbReference type="KEGG" id="mmu:78523"/>
<dbReference type="UCSC" id="uc008qgi.1">
    <property type="organism name" value="mouse"/>
</dbReference>
<dbReference type="AGR" id="MGI:2137211"/>
<dbReference type="CTD" id="65005"/>
<dbReference type="MGI" id="MGI:2137211">
    <property type="gene designation" value="Mrpl9"/>
</dbReference>
<dbReference type="VEuPathDB" id="HostDB:ENSMUSG00000028140"/>
<dbReference type="eggNOG" id="KOG4607">
    <property type="taxonomic scope" value="Eukaryota"/>
</dbReference>
<dbReference type="GeneTree" id="ENSGT00390000008281"/>
<dbReference type="HOGENOM" id="CLU_078938_0_0_1"/>
<dbReference type="InParanoid" id="Q99N94"/>
<dbReference type="OMA" id="AKHFIYE"/>
<dbReference type="OrthoDB" id="76737at9989"/>
<dbReference type="PhylomeDB" id="Q99N94"/>
<dbReference type="TreeFam" id="TF300170"/>
<dbReference type="Reactome" id="R-MMU-5389840">
    <property type="pathway name" value="Mitochondrial translation elongation"/>
</dbReference>
<dbReference type="Reactome" id="R-MMU-5419276">
    <property type="pathway name" value="Mitochondrial translation termination"/>
</dbReference>
<dbReference type="BioGRID-ORCS" id="78523">
    <property type="hits" value="13 hits in 79 CRISPR screens"/>
</dbReference>
<dbReference type="ChiTaRS" id="Mrpl9">
    <property type="organism name" value="mouse"/>
</dbReference>
<dbReference type="PRO" id="PR:Q99N94"/>
<dbReference type="Proteomes" id="UP000000589">
    <property type="component" value="Chromosome 3"/>
</dbReference>
<dbReference type="RNAct" id="Q99N94">
    <property type="molecule type" value="protein"/>
</dbReference>
<dbReference type="Bgee" id="ENSMUSG00000028140">
    <property type="expression patterns" value="Expressed in urinary bladder urothelium and 259 other cell types or tissues"/>
</dbReference>
<dbReference type="ExpressionAtlas" id="Q99N94">
    <property type="expression patterns" value="baseline and differential"/>
</dbReference>
<dbReference type="GO" id="GO:0005743">
    <property type="term" value="C:mitochondrial inner membrane"/>
    <property type="evidence" value="ECO:0000303"/>
    <property type="project" value="ComplexPortal"/>
</dbReference>
<dbReference type="GO" id="GO:0005762">
    <property type="term" value="C:mitochondrial large ribosomal subunit"/>
    <property type="evidence" value="ECO:0000250"/>
    <property type="project" value="UniProtKB"/>
</dbReference>
<dbReference type="GO" id="GO:0005739">
    <property type="term" value="C:mitochondrion"/>
    <property type="evidence" value="ECO:0007005"/>
    <property type="project" value="MGI"/>
</dbReference>
<dbReference type="GO" id="GO:0003735">
    <property type="term" value="F:structural constituent of ribosome"/>
    <property type="evidence" value="ECO:0007669"/>
    <property type="project" value="InterPro"/>
</dbReference>
<dbReference type="GO" id="GO:0032543">
    <property type="term" value="P:mitochondrial translation"/>
    <property type="evidence" value="ECO:0000303"/>
    <property type="project" value="ComplexPortal"/>
</dbReference>
<dbReference type="FunFam" id="3.40.5.10:FF:000005">
    <property type="entry name" value="39S ribosomal protein L9, mitochondrial"/>
    <property type="match status" value="1"/>
</dbReference>
<dbReference type="Gene3D" id="3.40.5.10">
    <property type="entry name" value="Ribosomal protein L9, N-terminal domain"/>
    <property type="match status" value="1"/>
</dbReference>
<dbReference type="InterPro" id="IPR056864">
    <property type="entry name" value="MRP-L9_N"/>
</dbReference>
<dbReference type="InterPro" id="IPR000244">
    <property type="entry name" value="Ribosomal_bL9"/>
</dbReference>
<dbReference type="InterPro" id="IPR009027">
    <property type="entry name" value="Ribosomal_bL9/RNase_H1_N"/>
</dbReference>
<dbReference type="InterPro" id="IPR020070">
    <property type="entry name" value="Ribosomal_bL9_N"/>
</dbReference>
<dbReference type="InterPro" id="IPR036935">
    <property type="entry name" value="Ribosomal_bL9_N_sf"/>
</dbReference>
<dbReference type="InterPro" id="IPR054302">
    <property type="entry name" value="Ribosomal_bL9m_C"/>
</dbReference>
<dbReference type="PANTHER" id="PTHR21368">
    <property type="entry name" value="50S RIBOSOMAL PROTEIN L9"/>
    <property type="match status" value="1"/>
</dbReference>
<dbReference type="Pfam" id="PF25131">
    <property type="entry name" value="bL9m_N"/>
    <property type="match status" value="1"/>
</dbReference>
<dbReference type="Pfam" id="PF22078">
    <property type="entry name" value="Ribosomal_bL9m_C"/>
    <property type="match status" value="1"/>
</dbReference>
<dbReference type="Pfam" id="PF01281">
    <property type="entry name" value="Ribosomal_L9_N"/>
    <property type="match status" value="1"/>
</dbReference>
<dbReference type="SUPFAM" id="SSF55658">
    <property type="entry name" value="L9 N-domain-like"/>
    <property type="match status" value="1"/>
</dbReference>
<reference key="1">
    <citation type="journal article" date="2005" name="Science">
        <title>The transcriptional landscape of the mammalian genome.</title>
        <authorList>
            <person name="Carninci P."/>
            <person name="Kasukawa T."/>
            <person name="Katayama S."/>
            <person name="Gough J."/>
            <person name="Frith M.C."/>
            <person name="Maeda N."/>
            <person name="Oyama R."/>
            <person name="Ravasi T."/>
            <person name="Lenhard B."/>
            <person name="Wells C."/>
            <person name="Kodzius R."/>
            <person name="Shimokawa K."/>
            <person name="Bajic V.B."/>
            <person name="Brenner S.E."/>
            <person name="Batalov S."/>
            <person name="Forrest A.R."/>
            <person name="Zavolan M."/>
            <person name="Davis M.J."/>
            <person name="Wilming L.G."/>
            <person name="Aidinis V."/>
            <person name="Allen J.E."/>
            <person name="Ambesi-Impiombato A."/>
            <person name="Apweiler R."/>
            <person name="Aturaliya R.N."/>
            <person name="Bailey T.L."/>
            <person name="Bansal M."/>
            <person name="Baxter L."/>
            <person name="Beisel K.W."/>
            <person name="Bersano T."/>
            <person name="Bono H."/>
            <person name="Chalk A.M."/>
            <person name="Chiu K.P."/>
            <person name="Choudhary V."/>
            <person name="Christoffels A."/>
            <person name="Clutterbuck D.R."/>
            <person name="Crowe M.L."/>
            <person name="Dalla E."/>
            <person name="Dalrymple B.P."/>
            <person name="de Bono B."/>
            <person name="Della Gatta G."/>
            <person name="di Bernardo D."/>
            <person name="Down T."/>
            <person name="Engstrom P."/>
            <person name="Fagiolini M."/>
            <person name="Faulkner G."/>
            <person name="Fletcher C.F."/>
            <person name="Fukushima T."/>
            <person name="Furuno M."/>
            <person name="Futaki S."/>
            <person name="Gariboldi M."/>
            <person name="Georgii-Hemming P."/>
            <person name="Gingeras T.R."/>
            <person name="Gojobori T."/>
            <person name="Green R.E."/>
            <person name="Gustincich S."/>
            <person name="Harbers M."/>
            <person name="Hayashi Y."/>
            <person name="Hensch T.K."/>
            <person name="Hirokawa N."/>
            <person name="Hill D."/>
            <person name="Huminiecki L."/>
            <person name="Iacono M."/>
            <person name="Ikeo K."/>
            <person name="Iwama A."/>
            <person name="Ishikawa T."/>
            <person name="Jakt M."/>
            <person name="Kanapin A."/>
            <person name="Katoh M."/>
            <person name="Kawasawa Y."/>
            <person name="Kelso J."/>
            <person name="Kitamura H."/>
            <person name="Kitano H."/>
            <person name="Kollias G."/>
            <person name="Krishnan S.P."/>
            <person name="Kruger A."/>
            <person name="Kummerfeld S.K."/>
            <person name="Kurochkin I.V."/>
            <person name="Lareau L.F."/>
            <person name="Lazarevic D."/>
            <person name="Lipovich L."/>
            <person name="Liu J."/>
            <person name="Liuni S."/>
            <person name="McWilliam S."/>
            <person name="Madan Babu M."/>
            <person name="Madera M."/>
            <person name="Marchionni L."/>
            <person name="Matsuda H."/>
            <person name="Matsuzawa S."/>
            <person name="Miki H."/>
            <person name="Mignone F."/>
            <person name="Miyake S."/>
            <person name="Morris K."/>
            <person name="Mottagui-Tabar S."/>
            <person name="Mulder N."/>
            <person name="Nakano N."/>
            <person name="Nakauchi H."/>
            <person name="Ng P."/>
            <person name="Nilsson R."/>
            <person name="Nishiguchi S."/>
            <person name="Nishikawa S."/>
            <person name="Nori F."/>
            <person name="Ohara O."/>
            <person name="Okazaki Y."/>
            <person name="Orlando V."/>
            <person name="Pang K.C."/>
            <person name="Pavan W.J."/>
            <person name="Pavesi G."/>
            <person name="Pesole G."/>
            <person name="Petrovsky N."/>
            <person name="Piazza S."/>
            <person name="Reed J."/>
            <person name="Reid J.F."/>
            <person name="Ring B.Z."/>
            <person name="Ringwald M."/>
            <person name="Rost B."/>
            <person name="Ruan Y."/>
            <person name="Salzberg S.L."/>
            <person name="Sandelin A."/>
            <person name="Schneider C."/>
            <person name="Schoenbach C."/>
            <person name="Sekiguchi K."/>
            <person name="Semple C.A."/>
            <person name="Seno S."/>
            <person name="Sessa L."/>
            <person name="Sheng Y."/>
            <person name="Shibata Y."/>
            <person name="Shimada H."/>
            <person name="Shimada K."/>
            <person name="Silva D."/>
            <person name="Sinclair B."/>
            <person name="Sperling S."/>
            <person name="Stupka E."/>
            <person name="Sugiura K."/>
            <person name="Sultana R."/>
            <person name="Takenaka Y."/>
            <person name="Taki K."/>
            <person name="Tammoja K."/>
            <person name="Tan S.L."/>
            <person name="Tang S."/>
            <person name="Taylor M.S."/>
            <person name="Tegner J."/>
            <person name="Teichmann S.A."/>
            <person name="Ueda H.R."/>
            <person name="van Nimwegen E."/>
            <person name="Verardo R."/>
            <person name="Wei C.L."/>
            <person name="Yagi K."/>
            <person name="Yamanishi H."/>
            <person name="Zabarovsky E."/>
            <person name="Zhu S."/>
            <person name="Zimmer A."/>
            <person name="Hide W."/>
            <person name="Bult C."/>
            <person name="Grimmond S.M."/>
            <person name="Teasdale R.D."/>
            <person name="Liu E.T."/>
            <person name="Brusic V."/>
            <person name="Quackenbush J."/>
            <person name="Wahlestedt C."/>
            <person name="Mattick J.S."/>
            <person name="Hume D.A."/>
            <person name="Kai C."/>
            <person name="Sasaki D."/>
            <person name="Tomaru Y."/>
            <person name="Fukuda S."/>
            <person name="Kanamori-Katayama M."/>
            <person name="Suzuki M."/>
            <person name="Aoki J."/>
            <person name="Arakawa T."/>
            <person name="Iida J."/>
            <person name="Imamura K."/>
            <person name="Itoh M."/>
            <person name="Kato T."/>
            <person name="Kawaji H."/>
            <person name="Kawagashira N."/>
            <person name="Kawashima T."/>
            <person name="Kojima M."/>
            <person name="Kondo S."/>
            <person name="Konno H."/>
            <person name="Nakano K."/>
            <person name="Ninomiya N."/>
            <person name="Nishio T."/>
            <person name="Okada M."/>
            <person name="Plessy C."/>
            <person name="Shibata K."/>
            <person name="Shiraki T."/>
            <person name="Suzuki S."/>
            <person name="Tagami M."/>
            <person name="Waki K."/>
            <person name="Watahiki A."/>
            <person name="Okamura-Oho Y."/>
            <person name="Suzuki H."/>
            <person name="Kawai J."/>
            <person name="Hayashizaki Y."/>
        </authorList>
    </citation>
    <scope>NUCLEOTIDE SEQUENCE [LARGE SCALE MRNA]</scope>
    <source>
        <strain>C57BL/6J</strain>
        <tissue>Corpora quadrigemina</tissue>
        <tissue>Muellerian duct</tissue>
    </source>
</reference>
<reference key="2">
    <citation type="journal article" date="2001" name="J. Biol. Chem.">
        <title>Structural compensation for the deficit of rRNA with proteins in the mammalian mitochondrial ribosome. Systematic analysis of protein components of the large ribosomal subunit from mammalian mitochondria.</title>
        <authorList>
            <person name="Suzuki T."/>
            <person name="Terasaki M."/>
            <person name="Takemoto-Hori C."/>
            <person name="Hanada T."/>
            <person name="Ueda T."/>
            <person name="Wada A."/>
            <person name="Watanabe K."/>
        </authorList>
    </citation>
    <scope>NUCLEOTIDE SEQUENCE [MRNA] OF 10-265</scope>
</reference>
<reference key="3">
    <citation type="journal article" date="2010" name="Cell">
        <title>A tissue-specific atlas of mouse protein phosphorylation and expression.</title>
        <authorList>
            <person name="Huttlin E.L."/>
            <person name="Jedrychowski M.P."/>
            <person name="Elias J.E."/>
            <person name="Goswami T."/>
            <person name="Rad R."/>
            <person name="Beausoleil S.A."/>
            <person name="Villen J."/>
            <person name="Haas W."/>
            <person name="Sowa M.E."/>
            <person name="Gygi S.P."/>
        </authorList>
    </citation>
    <scope>IDENTIFICATION BY MASS SPECTROMETRY [LARGE SCALE ANALYSIS]</scope>
    <source>
        <tissue>Brain</tissue>
        <tissue>Brown adipose tissue</tissue>
        <tissue>Heart</tissue>
        <tissue>Kidney</tissue>
        <tissue>Liver</tissue>
        <tissue>Spleen</tissue>
    </source>
</reference>
<protein>
    <recommendedName>
        <fullName evidence="3">Large ribosomal subunit protein bL9m</fullName>
    </recommendedName>
    <alternativeName>
        <fullName>39S ribosomal protein L9, mitochondrial</fullName>
        <shortName>L9mt</shortName>
        <shortName>MRP-L9</shortName>
    </alternativeName>
</protein>
<accession>Q99N94</accession>
<accession>Q3TSJ0</accession>
<accession>Q8BQZ2</accession>
<keyword id="KW-0496">Mitochondrion</keyword>
<keyword id="KW-1185">Reference proteome</keyword>
<keyword id="KW-0687">Ribonucleoprotein</keyword>
<keyword id="KW-0689">Ribosomal protein</keyword>
<keyword id="KW-0809">Transit peptide</keyword>
<proteinExistence type="evidence at protein level"/>
<comment type="subunit">
    <text evidence="2">Component of the mitochondrial ribosome large subunit (39S) which comprises a 16S rRNA and about 50 distinct proteins.</text>
</comment>
<comment type="subcellular location">
    <subcellularLocation>
        <location evidence="2">Mitochondrion</location>
    </subcellularLocation>
</comment>
<comment type="similarity">
    <text evidence="3">Belongs to the bacterial ribosomal protein bL9 family.</text>
</comment>
<organism>
    <name type="scientific">Mus musculus</name>
    <name type="common">Mouse</name>
    <dbReference type="NCBI Taxonomy" id="10090"/>
    <lineage>
        <taxon>Eukaryota</taxon>
        <taxon>Metazoa</taxon>
        <taxon>Chordata</taxon>
        <taxon>Craniata</taxon>
        <taxon>Vertebrata</taxon>
        <taxon>Euteleostomi</taxon>
        <taxon>Mammalia</taxon>
        <taxon>Eutheria</taxon>
        <taxon>Euarchontoglires</taxon>
        <taxon>Glires</taxon>
        <taxon>Rodentia</taxon>
        <taxon>Myomorpha</taxon>
        <taxon>Muroidea</taxon>
        <taxon>Muridae</taxon>
        <taxon>Murinae</taxon>
        <taxon>Mus</taxon>
        <taxon>Mus</taxon>
    </lineage>
</organism>